<dbReference type="EMBL" id="AE017221">
    <property type="protein sequence ID" value="AAS81236.1"/>
    <property type="molecule type" value="Genomic_DNA"/>
</dbReference>
<dbReference type="RefSeq" id="WP_011173319.1">
    <property type="nucleotide sequence ID" value="NC_005835.1"/>
</dbReference>
<dbReference type="SMR" id="Q72J87"/>
<dbReference type="GeneID" id="3169338"/>
<dbReference type="KEGG" id="tth:TT_C0892"/>
<dbReference type="eggNOG" id="COG0393">
    <property type="taxonomic scope" value="Bacteria"/>
</dbReference>
<dbReference type="HOGENOM" id="CLU_117144_3_2_0"/>
<dbReference type="OrthoDB" id="9796448at2"/>
<dbReference type="Proteomes" id="UP000000592">
    <property type="component" value="Chromosome"/>
</dbReference>
<dbReference type="Gene3D" id="3.30.110.70">
    <property type="entry name" value="Hypothetical protein apc22750. Chain B"/>
    <property type="match status" value="1"/>
</dbReference>
<dbReference type="HAMAP" id="MF_00338">
    <property type="entry name" value="UPF0145"/>
    <property type="match status" value="1"/>
</dbReference>
<dbReference type="InterPro" id="IPR035439">
    <property type="entry name" value="UPF0145_dom_sf"/>
</dbReference>
<dbReference type="InterPro" id="IPR002765">
    <property type="entry name" value="UPF0145_YbjQ-like"/>
</dbReference>
<dbReference type="NCBIfam" id="NF002776">
    <property type="entry name" value="PRK02877.1"/>
    <property type="match status" value="1"/>
</dbReference>
<dbReference type="PANTHER" id="PTHR34068">
    <property type="entry name" value="UPF0145 PROTEIN YBJQ"/>
    <property type="match status" value="1"/>
</dbReference>
<dbReference type="PANTHER" id="PTHR34068:SF1">
    <property type="entry name" value="UPF0145 PROTEIN YBJQ"/>
    <property type="match status" value="1"/>
</dbReference>
<dbReference type="Pfam" id="PF01906">
    <property type="entry name" value="YbjQ_1"/>
    <property type="match status" value="1"/>
</dbReference>
<dbReference type="SUPFAM" id="SSF117782">
    <property type="entry name" value="YbjQ-like"/>
    <property type="match status" value="1"/>
</dbReference>
<proteinExistence type="inferred from homology"/>
<comment type="similarity">
    <text evidence="1">Belongs to the UPF0145 family.</text>
</comment>
<feature type="chain" id="PRO_0000225851" description="UPF0145 protein TT_C0892">
    <location>
        <begin position="1"/>
        <end position="107"/>
    </location>
</feature>
<name>Y892_THET2</name>
<organism>
    <name type="scientific">Thermus thermophilus (strain ATCC BAA-163 / DSM 7039 / HB27)</name>
    <dbReference type="NCBI Taxonomy" id="262724"/>
    <lineage>
        <taxon>Bacteria</taxon>
        <taxon>Thermotogati</taxon>
        <taxon>Deinococcota</taxon>
        <taxon>Deinococci</taxon>
        <taxon>Thermales</taxon>
        <taxon>Thermaceae</taxon>
        <taxon>Thermus</taxon>
    </lineage>
</organism>
<accession>Q72J87</accession>
<gene>
    <name type="ordered locus">TT_C0892</name>
</gene>
<protein>
    <recommendedName>
        <fullName evidence="1">UPF0145 protein TT_C0892</fullName>
    </recommendedName>
</protein>
<sequence>MILTTTHEIEGRRIERYLGIVFGEAIVGANVLRDLLAQIRDIVGGRSGAYEAELRRARETALAEMAEAARRLGADAVVGVDLDYEVLGSGNSMLMVTASGTAVKLAP</sequence>
<evidence type="ECO:0000255" key="1">
    <source>
        <dbReference type="HAMAP-Rule" id="MF_00338"/>
    </source>
</evidence>
<reference key="1">
    <citation type="journal article" date="2004" name="Nat. Biotechnol.">
        <title>The genome sequence of the extreme thermophile Thermus thermophilus.</title>
        <authorList>
            <person name="Henne A."/>
            <person name="Brueggemann H."/>
            <person name="Raasch C."/>
            <person name="Wiezer A."/>
            <person name="Hartsch T."/>
            <person name="Liesegang H."/>
            <person name="Johann A."/>
            <person name="Lienard T."/>
            <person name="Gohl O."/>
            <person name="Martinez-Arias R."/>
            <person name="Jacobi C."/>
            <person name="Starkuviene V."/>
            <person name="Schlenczeck S."/>
            <person name="Dencker S."/>
            <person name="Huber R."/>
            <person name="Klenk H.-P."/>
            <person name="Kramer W."/>
            <person name="Merkl R."/>
            <person name="Gottschalk G."/>
            <person name="Fritz H.-J."/>
        </authorList>
    </citation>
    <scope>NUCLEOTIDE SEQUENCE [LARGE SCALE GENOMIC DNA]</scope>
    <source>
        <strain>ATCC BAA-163 / DSM 7039 / HB27</strain>
    </source>
</reference>